<evidence type="ECO:0000250" key="1">
    <source>
        <dbReference type="UniProtKB" id="P20108"/>
    </source>
</evidence>
<evidence type="ECO:0000250" key="2">
    <source>
        <dbReference type="UniProtKB" id="P30048"/>
    </source>
</evidence>
<evidence type="ECO:0000250" key="3">
    <source>
        <dbReference type="UniProtKB" id="P35705"/>
    </source>
</evidence>
<evidence type="ECO:0000255" key="4">
    <source>
        <dbReference type="PROSITE-ProRule" id="PRU00691"/>
    </source>
</evidence>
<evidence type="ECO:0000269" key="5">
    <source>
    </source>
</evidence>
<evidence type="ECO:0000305" key="6"/>
<proteinExistence type="evidence at protein level"/>
<reference key="1">
    <citation type="journal article" date="1999" name="FEBS Lett.">
        <title>Cloning of the peroxiredoxin gene family in rats and characterization of the fourth member.</title>
        <authorList>
            <person name="Matsumoto A."/>
            <person name="Okado A."/>
            <person name="Fujii T."/>
            <person name="Fujii J."/>
            <person name="Egashira M."/>
            <person name="Niikawa N."/>
            <person name="Taniguchi N."/>
        </authorList>
    </citation>
    <scope>NUCLEOTIDE SEQUENCE [MRNA]</scope>
    <scope>TISSUE SPECIFICITY</scope>
    <source>
        <tissue>Kidney</tissue>
    </source>
</reference>
<reference key="2">
    <citation type="journal article" date="2004" name="Genome Res.">
        <title>The status, quality, and expansion of the NIH full-length cDNA project: the Mammalian Gene Collection (MGC).</title>
        <authorList>
            <consortium name="The MGC Project Team"/>
        </authorList>
    </citation>
    <scope>NUCLEOTIDE SEQUENCE [LARGE SCALE MRNA]</scope>
</reference>
<reference key="3">
    <citation type="submission" date="2006-11" db="UniProtKB">
        <authorList>
            <person name="Lubec G."/>
            <person name="Afjehi-Sadat L."/>
        </authorList>
    </citation>
    <scope>PROTEIN SEQUENCE OF 171-208; 172-197 AND 209-239</scope>
    <scope>IDENTIFICATION BY MASS SPECTROMETRY</scope>
    <source>
        <strain>Sprague-Dawley</strain>
        <tissue>Spinal cord</tissue>
    </source>
</reference>
<keyword id="KW-0007">Acetylation</keyword>
<keyword id="KW-0049">Antioxidant</keyword>
<keyword id="KW-0963">Cytoplasm</keyword>
<keyword id="KW-0903">Direct protein sequencing</keyword>
<keyword id="KW-1015">Disulfide bond</keyword>
<keyword id="KW-0967">Endosome</keyword>
<keyword id="KW-0449">Lipoprotein</keyword>
<keyword id="KW-0496">Mitochondrion</keyword>
<keyword id="KW-0560">Oxidoreductase</keyword>
<keyword id="KW-0564">Palmitate</keyword>
<keyword id="KW-0575">Peroxidase</keyword>
<keyword id="KW-0597">Phosphoprotein</keyword>
<keyword id="KW-0676">Redox-active center</keyword>
<keyword id="KW-1185">Reference proteome</keyword>
<keyword id="KW-0809">Transit peptide</keyword>
<gene>
    <name type="primary">Prdx3</name>
</gene>
<accession>Q9Z0V6</accession>
<accession>Q6P9W3</accession>
<comment type="function">
    <text evidence="1 2">Thiol-specific peroxidase that catalyzes the reduction of hydrogen peroxide and organic hydroperoxides to water and alcohols, respectively. Plays a role in cell protection against oxidative stress by detoxifying peroxides. Acts synergistically with MAP3K13 to regulate the activation of NF-kappa-B in the cytosol (By similarity). Required for the maintenance of physical strength (By similarity).</text>
</comment>
<comment type="catalytic activity">
    <reaction evidence="2">
        <text>a hydroperoxide + [thioredoxin]-dithiol = an alcohol + [thioredoxin]-disulfide + H2O</text>
        <dbReference type="Rhea" id="RHEA:62620"/>
        <dbReference type="Rhea" id="RHEA-COMP:10698"/>
        <dbReference type="Rhea" id="RHEA-COMP:10700"/>
        <dbReference type="ChEBI" id="CHEBI:15377"/>
        <dbReference type="ChEBI" id="CHEBI:29950"/>
        <dbReference type="ChEBI" id="CHEBI:30879"/>
        <dbReference type="ChEBI" id="CHEBI:35924"/>
        <dbReference type="ChEBI" id="CHEBI:50058"/>
        <dbReference type="EC" id="1.11.1.24"/>
    </reaction>
</comment>
<comment type="subunit">
    <text evidence="2">Homodimer; disulfide-linked, upon oxidation. 6 homodimers assemble to form a ring-like dodecamer. Interacts with NEK6. Interacts with LRRK2. Interacts with MAP3K13 (By similarity). Interacts with RPS6KC1 (via PX domain).</text>
</comment>
<comment type="subcellular location">
    <subcellularLocation>
        <location evidence="3">Mitochondrion</location>
    </subcellularLocation>
    <subcellularLocation>
        <location evidence="2">Cytoplasm</location>
    </subcellularLocation>
    <subcellularLocation>
        <location evidence="2">Early endosome</location>
    </subcellularLocation>
    <text evidence="2">Localizes to early endosomes in a RPS6KC1-dependent manner.</text>
</comment>
<comment type="tissue specificity">
    <text evidence="5">Ubiquitous.</text>
</comment>
<comment type="PTM">
    <text evidence="2">Phosphorylated by LRRK2; phosphorylation reduces perodixase activity.</text>
</comment>
<comment type="PTM">
    <text evidence="2">The enzyme can be inactivated by further oxidation of the cysteine sulfenic acid (C(P)-SOH) to sulphinic acid (C(P)-SO2H) and sulphonic acid (C(P)-SO3H) instead of its condensation to a disulfide bond.</text>
</comment>
<comment type="PTM">
    <text evidence="1">S-palmitoylated.</text>
</comment>
<comment type="miscellaneous">
    <text evidence="2">The active site is a conserved redox-active cysteine residue, the peroxidatic cysteine (C(P)), which makes the nucleophilic attack on the peroxide substrate. The peroxide oxidizes the C(P)-SH to cysteine sulfenic acid (C(P)-SOH), which then reacts with another cysteine residue, the resolving cysteine (C(R)), to form a disulfide bridge. The disulfide is subsequently reduced by an appropriate electron donor to complete the catalytic cycle. In this typical 2-Cys peroxiredoxin, C(R) is provided by the other dimeric subunit to form an intersubunit disulfide. The disulfide is subsequently reduced by thioredoxin.</text>
</comment>
<comment type="similarity">
    <text evidence="6">Belongs to the peroxiredoxin family. AhpC/Prx1 subfamily.</text>
</comment>
<protein>
    <recommendedName>
        <fullName>Thioredoxin-dependent peroxide reductase, mitochondrial</fullName>
        <ecNumber evidence="2">1.11.1.24</ecNumber>
    </recommendedName>
    <alternativeName>
        <fullName>PRx III</fullName>
    </alternativeName>
    <alternativeName>
        <fullName>Peroxiredoxin-3</fullName>
        <shortName>PRX-3</shortName>
    </alternativeName>
    <alternativeName>
        <fullName evidence="6">Thioredoxin-dependent peroxiredoxin 3</fullName>
    </alternativeName>
</protein>
<sequence>MAAAAGRLLWSSVARPASTIFRSISASTVLRPVASRRTCLTDMLWSACPQAKFAFSTSSSFHTPAVTQHAPHFKGTAVVNGEFKELSLDDFKGKYLVLFFYPLDFTFVCPTEIVAFSDKANEFHDVNCEVVAVSVDSHFSHLAWINTPRKNGGLGHMNITLLSDLTKQISRDYGVLLESAGIALRGLFIIDPNGVIKHLSVNDLPVGRSVEEPLRLVKAFQFVETHGEVCPANWTPESPTIKPSPTASKEYFEKVHQ</sequence>
<dbReference type="EC" id="1.11.1.24" evidence="2"/>
<dbReference type="EMBL" id="AF106944">
    <property type="protein sequence ID" value="AAD17992.1"/>
    <property type="molecule type" value="mRNA"/>
</dbReference>
<dbReference type="EMBL" id="BC060567">
    <property type="protein sequence ID" value="AAH60567.1"/>
    <property type="molecule type" value="mRNA"/>
</dbReference>
<dbReference type="RefSeq" id="NP_071985.1">
    <property type="nucleotide sequence ID" value="NM_022540.1"/>
</dbReference>
<dbReference type="SMR" id="Q9Z0V6"/>
<dbReference type="BioGRID" id="249055">
    <property type="interactions" value="1"/>
</dbReference>
<dbReference type="FunCoup" id="Q9Z0V6">
    <property type="interactions" value="1549"/>
</dbReference>
<dbReference type="IntAct" id="Q9Z0V6">
    <property type="interactions" value="3"/>
</dbReference>
<dbReference type="MINT" id="Q9Z0V6"/>
<dbReference type="STRING" id="10116.ENSRNOP00000015186"/>
<dbReference type="PeroxiBase" id="4507">
    <property type="entry name" value="Rno2CysPrx03"/>
</dbReference>
<dbReference type="GlyGen" id="Q9Z0V6">
    <property type="glycosylation" value="3 sites, 1 O-linked glycan (2 sites)"/>
</dbReference>
<dbReference type="iPTMnet" id="Q9Z0V6"/>
<dbReference type="PhosphoSitePlus" id="Q9Z0V6"/>
<dbReference type="jPOST" id="Q9Z0V6"/>
<dbReference type="PaxDb" id="10116-ENSRNOP00000015186"/>
<dbReference type="GeneID" id="64371"/>
<dbReference type="KEGG" id="rno:64371"/>
<dbReference type="AGR" id="RGD:620040"/>
<dbReference type="CTD" id="10935"/>
<dbReference type="RGD" id="620040">
    <property type="gene designation" value="Prdx3"/>
</dbReference>
<dbReference type="eggNOG" id="KOG0852">
    <property type="taxonomic scope" value="Eukaryota"/>
</dbReference>
<dbReference type="InParanoid" id="Q9Z0V6"/>
<dbReference type="PhylomeDB" id="Q9Z0V6"/>
<dbReference type="Reactome" id="R-RNO-3299685">
    <property type="pathway name" value="Detoxification of Reactive Oxygen Species"/>
</dbReference>
<dbReference type="PRO" id="PR:Q9Z0V6"/>
<dbReference type="Proteomes" id="UP000002494">
    <property type="component" value="Unplaced"/>
</dbReference>
<dbReference type="GO" id="GO:0005737">
    <property type="term" value="C:cytoplasm"/>
    <property type="evidence" value="ECO:0000266"/>
    <property type="project" value="RGD"/>
</dbReference>
<dbReference type="GO" id="GO:0005829">
    <property type="term" value="C:cytosol"/>
    <property type="evidence" value="ECO:0000266"/>
    <property type="project" value="RGD"/>
</dbReference>
<dbReference type="GO" id="GO:0005769">
    <property type="term" value="C:early endosome"/>
    <property type="evidence" value="ECO:0000266"/>
    <property type="project" value="RGD"/>
</dbReference>
<dbReference type="GO" id="GO:0005739">
    <property type="term" value="C:mitochondrion"/>
    <property type="evidence" value="ECO:0000266"/>
    <property type="project" value="RGD"/>
</dbReference>
<dbReference type="GO" id="GO:0032991">
    <property type="term" value="C:protein-containing complex"/>
    <property type="evidence" value="ECO:0000266"/>
    <property type="project" value="RGD"/>
</dbReference>
<dbReference type="GO" id="GO:0043027">
    <property type="term" value="F:cysteine-type endopeptidase inhibitor activity involved in apoptotic process"/>
    <property type="evidence" value="ECO:0000266"/>
    <property type="project" value="RGD"/>
</dbReference>
<dbReference type="GO" id="GO:0042802">
    <property type="term" value="F:identical protein binding"/>
    <property type="evidence" value="ECO:0000266"/>
    <property type="project" value="RGD"/>
</dbReference>
<dbReference type="GO" id="GO:0019901">
    <property type="term" value="F:protein kinase binding"/>
    <property type="evidence" value="ECO:0000266"/>
    <property type="project" value="RGD"/>
</dbReference>
<dbReference type="GO" id="GO:0008379">
    <property type="term" value="F:thioredoxin peroxidase activity"/>
    <property type="evidence" value="ECO:0000266"/>
    <property type="project" value="RGD"/>
</dbReference>
<dbReference type="GO" id="GO:0045454">
    <property type="term" value="P:cell redox homeostasis"/>
    <property type="evidence" value="ECO:0000318"/>
    <property type="project" value="GO_Central"/>
</dbReference>
<dbReference type="GO" id="GO:0034599">
    <property type="term" value="P:cellular response to oxidative stress"/>
    <property type="evidence" value="ECO:0000266"/>
    <property type="project" value="RGD"/>
</dbReference>
<dbReference type="GO" id="GO:0034614">
    <property type="term" value="P:cellular response to reactive oxygen species"/>
    <property type="evidence" value="ECO:0000266"/>
    <property type="project" value="RGD"/>
</dbReference>
<dbReference type="GO" id="GO:0042744">
    <property type="term" value="P:hydrogen peroxide catabolic process"/>
    <property type="evidence" value="ECO:0000266"/>
    <property type="project" value="RGD"/>
</dbReference>
<dbReference type="GO" id="GO:0001893">
    <property type="term" value="P:maternal placenta development"/>
    <property type="evidence" value="ECO:0000266"/>
    <property type="project" value="RGD"/>
</dbReference>
<dbReference type="GO" id="GO:0007005">
    <property type="term" value="P:mitochondrion organization"/>
    <property type="evidence" value="ECO:0000266"/>
    <property type="project" value="RGD"/>
</dbReference>
<dbReference type="GO" id="GO:0030099">
    <property type="term" value="P:myeloid cell differentiation"/>
    <property type="evidence" value="ECO:0000266"/>
    <property type="project" value="RGD"/>
</dbReference>
<dbReference type="GO" id="GO:0043066">
    <property type="term" value="P:negative regulation of apoptotic process"/>
    <property type="evidence" value="ECO:0000266"/>
    <property type="project" value="RGD"/>
</dbReference>
<dbReference type="GO" id="GO:0043524">
    <property type="term" value="P:negative regulation of neuron apoptotic process"/>
    <property type="evidence" value="ECO:0000315"/>
    <property type="project" value="RGD"/>
</dbReference>
<dbReference type="GO" id="GO:0008284">
    <property type="term" value="P:positive regulation of cell population proliferation"/>
    <property type="evidence" value="ECO:0000266"/>
    <property type="project" value="RGD"/>
</dbReference>
<dbReference type="GO" id="GO:0051881">
    <property type="term" value="P:regulation of mitochondrial membrane potential"/>
    <property type="evidence" value="ECO:0000266"/>
    <property type="project" value="RGD"/>
</dbReference>
<dbReference type="GO" id="GO:0042542">
    <property type="term" value="P:response to hydrogen peroxide"/>
    <property type="evidence" value="ECO:0000266"/>
    <property type="project" value="RGD"/>
</dbReference>
<dbReference type="GO" id="GO:0032496">
    <property type="term" value="P:response to lipopolysaccharide"/>
    <property type="evidence" value="ECO:0000266"/>
    <property type="project" value="RGD"/>
</dbReference>
<dbReference type="GO" id="GO:0006979">
    <property type="term" value="P:response to oxidative stress"/>
    <property type="evidence" value="ECO:0000266"/>
    <property type="project" value="RGD"/>
</dbReference>
<dbReference type="CDD" id="cd03015">
    <property type="entry name" value="PRX_Typ2cys"/>
    <property type="match status" value="1"/>
</dbReference>
<dbReference type="FunFam" id="3.40.30.10:FF:000003">
    <property type="entry name" value="Peroxiredoxin 1"/>
    <property type="match status" value="1"/>
</dbReference>
<dbReference type="Gene3D" id="3.40.30.10">
    <property type="entry name" value="Glutaredoxin"/>
    <property type="match status" value="1"/>
</dbReference>
<dbReference type="InterPro" id="IPR000866">
    <property type="entry name" value="AhpC/TSA"/>
</dbReference>
<dbReference type="InterPro" id="IPR050217">
    <property type="entry name" value="Peroxiredoxin"/>
</dbReference>
<dbReference type="InterPro" id="IPR019479">
    <property type="entry name" value="Peroxiredoxin_C"/>
</dbReference>
<dbReference type="InterPro" id="IPR036249">
    <property type="entry name" value="Thioredoxin-like_sf"/>
</dbReference>
<dbReference type="InterPro" id="IPR013766">
    <property type="entry name" value="Thioredoxin_domain"/>
</dbReference>
<dbReference type="PANTHER" id="PTHR10681">
    <property type="entry name" value="THIOREDOXIN PEROXIDASE"/>
    <property type="match status" value="1"/>
</dbReference>
<dbReference type="PANTHER" id="PTHR10681:SF128">
    <property type="entry name" value="THIOREDOXIN-DEPENDENT PEROXIDE REDUCTASE, MITOCHONDRIAL"/>
    <property type="match status" value="1"/>
</dbReference>
<dbReference type="Pfam" id="PF10417">
    <property type="entry name" value="1-cysPrx_C"/>
    <property type="match status" value="1"/>
</dbReference>
<dbReference type="Pfam" id="PF00578">
    <property type="entry name" value="AhpC-TSA"/>
    <property type="match status" value="1"/>
</dbReference>
<dbReference type="SUPFAM" id="SSF52833">
    <property type="entry name" value="Thioredoxin-like"/>
    <property type="match status" value="1"/>
</dbReference>
<dbReference type="PROSITE" id="PS51352">
    <property type="entry name" value="THIOREDOXIN_2"/>
    <property type="match status" value="1"/>
</dbReference>
<feature type="transit peptide" description="Mitochondrion" evidence="2">
    <location>
        <begin position="1"/>
        <end position="62"/>
    </location>
</feature>
<feature type="chain" id="PRO_0000256859" description="Thioredoxin-dependent peroxide reductase, mitochondrial">
    <location>
        <begin position="63"/>
        <end position="257"/>
    </location>
</feature>
<feature type="domain" description="Thioredoxin" evidence="4">
    <location>
        <begin position="64"/>
        <end position="222"/>
    </location>
</feature>
<feature type="active site" description="Cysteine sulfenic acid (-SOH) intermediate" evidence="3">
    <location>
        <position position="109"/>
    </location>
</feature>
<feature type="modified residue" description="N6-succinyllysine" evidence="1">
    <location>
        <position position="84"/>
    </location>
</feature>
<feature type="modified residue" description="N6-acetyllysine; alternate" evidence="2">
    <location>
        <position position="92"/>
    </location>
</feature>
<feature type="modified residue" description="N6-succinyllysine; alternate" evidence="1">
    <location>
        <position position="92"/>
    </location>
</feature>
<feature type="modified residue" description="Phosphothreonine" evidence="2">
    <location>
        <position position="147"/>
    </location>
</feature>
<feature type="disulfide bond" description="Interchain (with C-230); in linked form" evidence="3">
    <location>
        <position position="109"/>
    </location>
</feature>
<feature type="disulfide bond" description="Interchain (with C-109); in linked form" evidence="3">
    <location>
        <position position="230"/>
    </location>
</feature>
<feature type="sequence conflict" description="In Ref. 2; AAH60567." evidence="6" ref="2">
    <location>
        <begin position="207"/>
        <end position="216"/>
    </location>
</feature>
<feature type="sequence conflict" description="In Ref. 1; AAD17992." evidence="6" ref="1">
    <original>A</original>
    <variation>P</variation>
    <location>
        <position position="232"/>
    </location>
</feature>
<name>PRDX3_RAT</name>
<organism>
    <name type="scientific">Rattus norvegicus</name>
    <name type="common">Rat</name>
    <dbReference type="NCBI Taxonomy" id="10116"/>
    <lineage>
        <taxon>Eukaryota</taxon>
        <taxon>Metazoa</taxon>
        <taxon>Chordata</taxon>
        <taxon>Craniata</taxon>
        <taxon>Vertebrata</taxon>
        <taxon>Euteleostomi</taxon>
        <taxon>Mammalia</taxon>
        <taxon>Eutheria</taxon>
        <taxon>Euarchontoglires</taxon>
        <taxon>Glires</taxon>
        <taxon>Rodentia</taxon>
        <taxon>Myomorpha</taxon>
        <taxon>Muroidea</taxon>
        <taxon>Muridae</taxon>
        <taxon>Murinae</taxon>
        <taxon>Rattus</taxon>
    </lineage>
</organism>